<comment type="cofactor">
    <cofactor evidence="3">
        <name>pyridoxal 5'-phosphate</name>
        <dbReference type="ChEBI" id="CHEBI:597326"/>
    </cofactor>
</comment>
<comment type="similarity">
    <text evidence="3">In the C-terminal section; belongs to the class-I pyridoxal-phosphate-dependent aminotransferase family.</text>
</comment>
<reference key="1">
    <citation type="journal article" date="1993" name="Mol. Microbiol.">
        <title>Sequence and analysis of the genetic locus responsible for surfactin synthesis in Bacillus subtilis.</title>
        <authorList>
            <person name="Cosmina P."/>
            <person name="Rodriguez F."/>
            <person name="de Ferra F."/>
            <person name="Grandi G."/>
            <person name="Perego M."/>
            <person name="Venema G."/>
            <person name="van Sinderen D."/>
        </authorList>
    </citation>
    <scope>NUCLEOTIDE SEQUENCE [GENOMIC DNA]</scope>
    <source>
        <strain>168 / JH642</strain>
    </source>
</reference>
<reference key="2">
    <citation type="journal article" date="1996" name="Microbiology">
        <title>The 25 degrees-36 degrees region of the Bacillus subtilis chromosome: determination of the sequence of a 146 kb segment and identification of 113 genes.</title>
        <authorList>
            <person name="Yamane K."/>
            <person name="Kumano M."/>
            <person name="Kurita K."/>
        </authorList>
    </citation>
    <scope>NUCLEOTIDE SEQUENCE [GENOMIC DNA]</scope>
    <source>
        <strain>168</strain>
    </source>
</reference>
<reference key="3">
    <citation type="journal article" date="1997" name="Nature">
        <title>The complete genome sequence of the Gram-positive bacterium Bacillus subtilis.</title>
        <authorList>
            <person name="Kunst F."/>
            <person name="Ogasawara N."/>
            <person name="Moszer I."/>
            <person name="Albertini A.M."/>
            <person name="Alloni G."/>
            <person name="Azevedo V."/>
            <person name="Bertero M.G."/>
            <person name="Bessieres P."/>
            <person name="Bolotin A."/>
            <person name="Borchert S."/>
            <person name="Borriss R."/>
            <person name="Boursier L."/>
            <person name="Brans A."/>
            <person name="Braun M."/>
            <person name="Brignell S.C."/>
            <person name="Bron S."/>
            <person name="Brouillet S."/>
            <person name="Bruschi C.V."/>
            <person name="Caldwell B."/>
            <person name="Capuano V."/>
            <person name="Carter N.M."/>
            <person name="Choi S.-K."/>
            <person name="Codani J.-J."/>
            <person name="Connerton I.F."/>
            <person name="Cummings N.J."/>
            <person name="Daniel R.A."/>
            <person name="Denizot F."/>
            <person name="Devine K.M."/>
            <person name="Duesterhoeft A."/>
            <person name="Ehrlich S.D."/>
            <person name="Emmerson P.T."/>
            <person name="Entian K.-D."/>
            <person name="Errington J."/>
            <person name="Fabret C."/>
            <person name="Ferrari E."/>
            <person name="Foulger D."/>
            <person name="Fritz C."/>
            <person name="Fujita M."/>
            <person name="Fujita Y."/>
            <person name="Fuma S."/>
            <person name="Galizzi A."/>
            <person name="Galleron N."/>
            <person name="Ghim S.-Y."/>
            <person name="Glaser P."/>
            <person name="Goffeau A."/>
            <person name="Golightly E.J."/>
            <person name="Grandi G."/>
            <person name="Guiseppi G."/>
            <person name="Guy B.J."/>
            <person name="Haga K."/>
            <person name="Haiech J."/>
            <person name="Harwood C.R."/>
            <person name="Henaut A."/>
            <person name="Hilbert H."/>
            <person name="Holsappel S."/>
            <person name="Hosono S."/>
            <person name="Hullo M.-F."/>
            <person name="Itaya M."/>
            <person name="Jones L.-M."/>
            <person name="Joris B."/>
            <person name="Karamata D."/>
            <person name="Kasahara Y."/>
            <person name="Klaerr-Blanchard M."/>
            <person name="Klein C."/>
            <person name="Kobayashi Y."/>
            <person name="Koetter P."/>
            <person name="Koningstein G."/>
            <person name="Krogh S."/>
            <person name="Kumano M."/>
            <person name="Kurita K."/>
            <person name="Lapidus A."/>
            <person name="Lardinois S."/>
            <person name="Lauber J."/>
            <person name="Lazarevic V."/>
            <person name="Lee S.-M."/>
            <person name="Levine A."/>
            <person name="Liu H."/>
            <person name="Masuda S."/>
            <person name="Mauel C."/>
            <person name="Medigue C."/>
            <person name="Medina N."/>
            <person name="Mellado R.P."/>
            <person name="Mizuno M."/>
            <person name="Moestl D."/>
            <person name="Nakai S."/>
            <person name="Noback M."/>
            <person name="Noone D."/>
            <person name="O'Reilly M."/>
            <person name="Ogawa K."/>
            <person name="Ogiwara A."/>
            <person name="Oudega B."/>
            <person name="Park S.-H."/>
            <person name="Parro V."/>
            <person name="Pohl T.M."/>
            <person name="Portetelle D."/>
            <person name="Porwollik S."/>
            <person name="Prescott A.M."/>
            <person name="Presecan E."/>
            <person name="Pujic P."/>
            <person name="Purnelle B."/>
            <person name="Rapoport G."/>
            <person name="Rey M."/>
            <person name="Reynolds S."/>
            <person name="Rieger M."/>
            <person name="Rivolta C."/>
            <person name="Rocha E."/>
            <person name="Roche B."/>
            <person name="Rose M."/>
            <person name="Sadaie Y."/>
            <person name="Sato T."/>
            <person name="Scanlan E."/>
            <person name="Schleich S."/>
            <person name="Schroeter R."/>
            <person name="Scoffone F."/>
            <person name="Sekiguchi J."/>
            <person name="Sekowska A."/>
            <person name="Seror S.J."/>
            <person name="Serror P."/>
            <person name="Shin B.-S."/>
            <person name="Soldo B."/>
            <person name="Sorokin A."/>
            <person name="Tacconi E."/>
            <person name="Takagi T."/>
            <person name="Takahashi H."/>
            <person name="Takemaru K."/>
            <person name="Takeuchi M."/>
            <person name="Tamakoshi A."/>
            <person name="Tanaka T."/>
            <person name="Terpstra P."/>
            <person name="Tognoni A."/>
            <person name="Tosato V."/>
            <person name="Uchiyama S."/>
            <person name="Vandenbol M."/>
            <person name="Vannier F."/>
            <person name="Vassarotti A."/>
            <person name="Viari A."/>
            <person name="Wambutt R."/>
            <person name="Wedler E."/>
            <person name="Wedler H."/>
            <person name="Weitzenegger T."/>
            <person name="Winters P."/>
            <person name="Wipat A."/>
            <person name="Yamamoto H."/>
            <person name="Yamane K."/>
            <person name="Yasumoto K."/>
            <person name="Yata K."/>
            <person name="Yoshida K."/>
            <person name="Yoshikawa H.-F."/>
            <person name="Zumstein E."/>
            <person name="Yoshikawa H."/>
            <person name="Danchin A."/>
        </authorList>
    </citation>
    <scope>NUCLEOTIDE SEQUENCE [LARGE SCALE GENOMIC DNA]</scope>
    <source>
        <strain>168</strain>
    </source>
</reference>
<reference key="4">
    <citation type="journal article" date="2002" name="Mol. Microbiol.">
        <title>GabR, a member of a novel protein family, regulates the utilization of gamma-aminobutyrate in Bacillus subtilis.</title>
        <authorList>
            <person name="Belitsky B.R."/>
            <person name="Sonenshein A.L."/>
        </authorList>
    </citation>
    <scope>GENE FAMILY</scope>
</reference>
<proteinExistence type="inferred from homology"/>
<name>YCXD_BACSU</name>
<dbReference type="EMBL" id="X70356">
    <property type="protein sequence ID" value="CAA49821.1"/>
    <property type="molecule type" value="Genomic_DNA"/>
</dbReference>
<dbReference type="EMBL" id="D50453">
    <property type="protein sequence ID" value="BAA08990.1"/>
    <property type="molecule type" value="Genomic_DNA"/>
</dbReference>
<dbReference type="EMBL" id="AL009126">
    <property type="protein sequence ID" value="CAB12150.1"/>
    <property type="molecule type" value="Genomic_DNA"/>
</dbReference>
<dbReference type="PIR" id="I40492">
    <property type="entry name" value="I40492"/>
</dbReference>
<dbReference type="RefSeq" id="NP_388238.1">
    <property type="nucleotide sequence ID" value="NC_000964.3"/>
</dbReference>
<dbReference type="RefSeq" id="WP_003246711.1">
    <property type="nucleotide sequence ID" value="NZ_OZ025638.1"/>
</dbReference>
<dbReference type="SMR" id="Q08792"/>
<dbReference type="FunCoup" id="Q08792">
    <property type="interactions" value="154"/>
</dbReference>
<dbReference type="STRING" id="224308.BSU03560"/>
<dbReference type="PaxDb" id="224308-BSU03560"/>
<dbReference type="EnsemblBacteria" id="CAB12150">
    <property type="protein sequence ID" value="CAB12150"/>
    <property type="gene ID" value="BSU_03560"/>
</dbReference>
<dbReference type="GeneID" id="938304"/>
<dbReference type="KEGG" id="bsu:BSU03560"/>
<dbReference type="PATRIC" id="fig|224308.179.peg.373"/>
<dbReference type="eggNOG" id="COG1167">
    <property type="taxonomic scope" value="Bacteria"/>
</dbReference>
<dbReference type="InParanoid" id="Q08792"/>
<dbReference type="OrthoDB" id="9802601at2"/>
<dbReference type="PhylomeDB" id="Q08792"/>
<dbReference type="BioCyc" id="BSUB:BSU03560-MONOMER"/>
<dbReference type="Proteomes" id="UP000001570">
    <property type="component" value="Chromosome"/>
</dbReference>
<dbReference type="GO" id="GO:0003677">
    <property type="term" value="F:DNA binding"/>
    <property type="evidence" value="ECO:0007669"/>
    <property type="project" value="UniProtKB-KW"/>
</dbReference>
<dbReference type="GO" id="GO:0003700">
    <property type="term" value="F:DNA-binding transcription factor activity"/>
    <property type="evidence" value="ECO:0007669"/>
    <property type="project" value="InterPro"/>
</dbReference>
<dbReference type="GO" id="GO:0030170">
    <property type="term" value="F:pyridoxal phosphate binding"/>
    <property type="evidence" value="ECO:0007669"/>
    <property type="project" value="InterPro"/>
</dbReference>
<dbReference type="GO" id="GO:0008483">
    <property type="term" value="F:transaminase activity"/>
    <property type="evidence" value="ECO:0000318"/>
    <property type="project" value="GO_Central"/>
</dbReference>
<dbReference type="GO" id="GO:1901605">
    <property type="term" value="P:alpha-amino acid metabolic process"/>
    <property type="evidence" value="ECO:0000318"/>
    <property type="project" value="GO_Central"/>
</dbReference>
<dbReference type="GO" id="GO:0009058">
    <property type="term" value="P:biosynthetic process"/>
    <property type="evidence" value="ECO:0007669"/>
    <property type="project" value="InterPro"/>
</dbReference>
<dbReference type="CDD" id="cd00609">
    <property type="entry name" value="AAT_like"/>
    <property type="match status" value="1"/>
</dbReference>
<dbReference type="CDD" id="cd07377">
    <property type="entry name" value="WHTH_GntR"/>
    <property type="match status" value="1"/>
</dbReference>
<dbReference type="FunFam" id="1.10.10.10:FF:000401">
    <property type="entry name" value="GntR family transcriptional regulator"/>
    <property type="match status" value="1"/>
</dbReference>
<dbReference type="FunFam" id="3.40.640.10:FF:000114">
    <property type="entry name" value="Transcriptional regulator, GntR family"/>
    <property type="match status" value="1"/>
</dbReference>
<dbReference type="Gene3D" id="3.40.640.10">
    <property type="entry name" value="Type I PLP-dependent aspartate aminotransferase-like (Major domain)"/>
    <property type="match status" value="1"/>
</dbReference>
<dbReference type="Gene3D" id="1.10.10.10">
    <property type="entry name" value="Winged helix-like DNA-binding domain superfamily/Winged helix DNA-binding domain"/>
    <property type="match status" value="1"/>
</dbReference>
<dbReference type="InterPro" id="IPR004839">
    <property type="entry name" value="Aminotransferase_I/II_large"/>
</dbReference>
<dbReference type="InterPro" id="IPR051446">
    <property type="entry name" value="HTH_trans_reg/aminotransferase"/>
</dbReference>
<dbReference type="InterPro" id="IPR015424">
    <property type="entry name" value="PyrdxlP-dep_Trfase"/>
</dbReference>
<dbReference type="InterPro" id="IPR015421">
    <property type="entry name" value="PyrdxlP-dep_Trfase_major"/>
</dbReference>
<dbReference type="InterPro" id="IPR000524">
    <property type="entry name" value="Tscrpt_reg_HTH_GntR"/>
</dbReference>
<dbReference type="InterPro" id="IPR036388">
    <property type="entry name" value="WH-like_DNA-bd_sf"/>
</dbReference>
<dbReference type="InterPro" id="IPR036390">
    <property type="entry name" value="WH_DNA-bd_sf"/>
</dbReference>
<dbReference type="PANTHER" id="PTHR46577">
    <property type="entry name" value="HTH-TYPE TRANSCRIPTIONAL REGULATORY PROTEIN GABR"/>
    <property type="match status" value="1"/>
</dbReference>
<dbReference type="PANTHER" id="PTHR46577:SF1">
    <property type="entry name" value="HTH-TYPE TRANSCRIPTIONAL REGULATORY PROTEIN GABR"/>
    <property type="match status" value="1"/>
</dbReference>
<dbReference type="Pfam" id="PF00155">
    <property type="entry name" value="Aminotran_1_2"/>
    <property type="match status" value="1"/>
</dbReference>
<dbReference type="Pfam" id="PF00392">
    <property type="entry name" value="GntR"/>
    <property type="match status" value="1"/>
</dbReference>
<dbReference type="SMART" id="SM00345">
    <property type="entry name" value="HTH_GNTR"/>
    <property type="match status" value="1"/>
</dbReference>
<dbReference type="SUPFAM" id="SSF53383">
    <property type="entry name" value="PLP-dependent transferases"/>
    <property type="match status" value="1"/>
</dbReference>
<dbReference type="SUPFAM" id="SSF46785">
    <property type="entry name" value="Winged helix' DNA-binding domain"/>
    <property type="match status" value="1"/>
</dbReference>
<dbReference type="PROSITE" id="PS50949">
    <property type="entry name" value="HTH_GNTR"/>
    <property type="match status" value="1"/>
</dbReference>
<evidence type="ECO:0000250" key="1"/>
<evidence type="ECO:0000255" key="2">
    <source>
        <dbReference type="PROSITE-ProRule" id="PRU00307"/>
    </source>
</evidence>
<evidence type="ECO:0000305" key="3"/>
<sequence>MEKYMSLLTRIEEMMQSTSYQEGDRLPSIRQLSARYQVSKSTVIRALQELEKRHLIYSVPKSGYYIVKKSGKSKSGQPGPIDFATSAPDPDVFPYLDFQHCINKAIDTYKNDLFIYGTPKGLPSLIRVLRKLLATQQVFADERHIFITSGVQQALSLLCAMPFPNGKEKIAIEQPGYHLMVEQLETLGIPAIGVKRTEEGLDIAKVERLFQTESIKFFYTMPRFHNPLGCSLSERDKQELVRLAEAYDVYLVEDDYLGDLEENKKADPLYAYDLSSHVIYLKSFSKMMFPGLRVGAAVLPEALTDTFYAYKKLNDIDCSMISQAALEIYLKSGMYGRHKEKIRDSYKERSLRLHQAIRTHRQLGSGRFTFSSGQAPCMHTHLVLPQDLPASRVIHRLEKQGVLLEAIDRHYLSDYPKENLLKINISNVKTEDIERGVKLLMSHL</sequence>
<gene>
    <name type="primary">ycxD</name>
    <name type="ordered locus">BSU03560</name>
</gene>
<protein>
    <recommendedName>
        <fullName>Uncharacterized HTH-type transcriptional regulator YcxD</fullName>
    </recommendedName>
    <alternativeName>
        <fullName>ORF8</fullName>
    </alternativeName>
</protein>
<feature type="chain" id="PRO_0000050707" description="Uncharacterized HTH-type transcriptional regulator YcxD">
    <location>
        <begin position="1"/>
        <end position="444"/>
    </location>
</feature>
<feature type="domain" description="HTH gntR-type" evidence="2">
    <location>
        <begin position="1"/>
        <end position="69"/>
    </location>
</feature>
<feature type="DNA-binding region" description="H-T-H motif" evidence="2">
    <location>
        <begin position="29"/>
        <end position="48"/>
    </location>
</feature>
<feature type="modified residue" description="N6-(pyridoxal phosphate)lysine" evidence="1">
    <location>
        <position position="286"/>
    </location>
</feature>
<organism>
    <name type="scientific">Bacillus subtilis (strain 168)</name>
    <dbReference type="NCBI Taxonomy" id="224308"/>
    <lineage>
        <taxon>Bacteria</taxon>
        <taxon>Bacillati</taxon>
        <taxon>Bacillota</taxon>
        <taxon>Bacilli</taxon>
        <taxon>Bacillales</taxon>
        <taxon>Bacillaceae</taxon>
        <taxon>Bacillus</taxon>
    </lineage>
</organism>
<keyword id="KW-0032">Aminotransferase</keyword>
<keyword id="KW-0238">DNA-binding</keyword>
<keyword id="KW-0663">Pyridoxal phosphate</keyword>
<keyword id="KW-1185">Reference proteome</keyword>
<keyword id="KW-0804">Transcription</keyword>
<keyword id="KW-0805">Transcription regulation</keyword>
<keyword id="KW-0808">Transferase</keyword>
<accession>Q08792</accession>